<evidence type="ECO:0000250" key="1"/>
<evidence type="ECO:0000250" key="2">
    <source>
        <dbReference type="UniProtKB" id="B3FIS6"/>
    </source>
</evidence>
<evidence type="ECO:0000250" key="3">
    <source>
        <dbReference type="UniProtKB" id="Q86C51"/>
    </source>
</evidence>
<evidence type="ECO:0000255" key="4"/>
<evidence type="ECO:0000305" key="5"/>
<dbReference type="EMBL" id="EU195269">
    <property type="protein sequence ID" value="ABY77722.1"/>
    <property type="molecule type" value="mRNA"/>
</dbReference>
<dbReference type="BMRB" id="B3FIS5"/>
<dbReference type="SMR" id="B3FIS5"/>
<dbReference type="ArachnoServer" id="AS000355">
    <property type="toxin name" value="U5-theraphotoxin-Hs1a"/>
</dbReference>
<dbReference type="GO" id="GO:0005576">
    <property type="term" value="C:extracellular region"/>
    <property type="evidence" value="ECO:0007669"/>
    <property type="project" value="UniProtKB-SubCell"/>
</dbReference>
<dbReference type="GO" id="GO:0030246">
    <property type="term" value="F:carbohydrate binding"/>
    <property type="evidence" value="ECO:0007669"/>
    <property type="project" value="UniProtKB-KW"/>
</dbReference>
<dbReference type="GO" id="GO:0008200">
    <property type="term" value="F:ion channel inhibitor activity"/>
    <property type="evidence" value="ECO:0007669"/>
    <property type="project" value="InterPro"/>
</dbReference>
<dbReference type="GO" id="GO:0090729">
    <property type="term" value="F:toxin activity"/>
    <property type="evidence" value="ECO:0007669"/>
    <property type="project" value="UniProtKB-KW"/>
</dbReference>
<dbReference type="InterPro" id="IPR011696">
    <property type="entry name" value="Huwentoxin-1"/>
</dbReference>
<dbReference type="InterPro" id="IPR013140">
    <property type="entry name" value="Huwentoxin_CS1"/>
</dbReference>
<dbReference type="Pfam" id="PF07740">
    <property type="entry name" value="Toxin_12"/>
    <property type="match status" value="1"/>
</dbReference>
<dbReference type="SUPFAM" id="SSF57059">
    <property type="entry name" value="omega toxin-like"/>
    <property type="match status" value="1"/>
</dbReference>
<dbReference type="PROSITE" id="PS60021">
    <property type="entry name" value="HWTX_1"/>
    <property type="match status" value="1"/>
</dbReference>
<reference key="1">
    <citation type="journal article" date="2008" name="Toxicon">
        <title>Molecular diversification based on analysis of expressed sequence tags from the venom glands of the Chinese bird spider Ornithoctonus huwena.</title>
        <authorList>
            <person name="Jiang L."/>
            <person name="Peng L."/>
            <person name="Chen J."/>
            <person name="Zhang Y."/>
            <person name="Xiong X."/>
            <person name="Liang S."/>
        </authorList>
    </citation>
    <scope>NUCLEOTIDE SEQUENCE [MRNA]</scope>
    <source>
        <tissue>Venom gland</tissue>
    </source>
</reference>
<protein>
    <recommendedName>
        <fullName>U5-theraphotoxin-Hs1a 6</fullName>
        <shortName>U5-TRTX-Hs1a</shortName>
    </recommendedName>
    <alternativeName>
        <fullName>Lectin SHL-Ia6</fullName>
    </alternativeName>
</protein>
<accession>B3FIS5</accession>
<comment type="function">
    <text evidence="3">Agglutinates erythrocytes.</text>
</comment>
<comment type="subcellular location">
    <subcellularLocation>
        <location evidence="1">Secreted</location>
    </subcellularLocation>
</comment>
<comment type="tissue specificity">
    <text>Expressed by the venom gland.</text>
</comment>
<comment type="domain">
    <text>The presence of a 'disulfide through disulfide knot' structurally defines this protein as a knottin.</text>
</comment>
<comment type="similarity">
    <text evidence="5">Belongs to the neurotoxin 10 (Hwtx-1) family. 51 (Hntx-8) subfamily. Hntx-8 sub-subfamily.</text>
</comment>
<proteinExistence type="evidence at transcript level"/>
<keyword id="KW-0165">Cleavage on pair of basic residues</keyword>
<keyword id="KW-1015">Disulfide bond</keyword>
<keyword id="KW-0960">Knottin</keyword>
<keyword id="KW-0430">Lectin</keyword>
<keyword id="KW-0964">Secreted</keyword>
<keyword id="KW-0732">Signal</keyword>
<keyword id="KW-0800">Toxin</keyword>
<sequence length="83" mass="9421">MKTSMFLTLTGLVLLFVVCYASESEEKEFPKELLSSIFAADSDFKVEERGCLGDKCDYNNGCCSGYVCSRTWKWCVLAGPWRR</sequence>
<name>TXLA6_CYRSC</name>
<feature type="signal peptide" evidence="4">
    <location>
        <begin position="1"/>
        <end position="21"/>
    </location>
</feature>
<feature type="propeptide" id="PRO_0000380172" evidence="1">
    <location>
        <begin position="22"/>
        <end position="49"/>
    </location>
</feature>
<feature type="chain" id="PRO_0000380173" description="U5-theraphotoxin-Hs1a 6">
    <location>
        <begin position="50"/>
        <end position="81"/>
    </location>
</feature>
<feature type="disulfide bond" evidence="2">
    <location>
        <begin position="51"/>
        <end position="63"/>
    </location>
</feature>
<feature type="disulfide bond" evidence="2">
    <location>
        <begin position="56"/>
        <end position="68"/>
    </location>
</feature>
<feature type="disulfide bond" evidence="2">
    <location>
        <begin position="62"/>
        <end position="75"/>
    </location>
</feature>
<organism>
    <name type="scientific">Cyriopagopus schmidti</name>
    <name type="common">Chinese bird spider</name>
    <name type="synonym">Haplopelma schmidti</name>
    <dbReference type="NCBI Taxonomy" id="29017"/>
    <lineage>
        <taxon>Eukaryota</taxon>
        <taxon>Metazoa</taxon>
        <taxon>Ecdysozoa</taxon>
        <taxon>Arthropoda</taxon>
        <taxon>Chelicerata</taxon>
        <taxon>Arachnida</taxon>
        <taxon>Araneae</taxon>
        <taxon>Mygalomorphae</taxon>
        <taxon>Theraphosidae</taxon>
        <taxon>Cyriopagopus</taxon>
    </lineage>
</organism>